<comment type="function">
    <text evidence="1">Component of the type VII secretion system (Ess). Required for the secretion of EsxA and EsxB.</text>
</comment>
<comment type="subcellular location">
    <subcellularLocation>
        <location evidence="2">Cell membrane</location>
        <topology evidence="3">Single-pass membrane protein</topology>
    </subcellularLocation>
</comment>
<comment type="similarity">
    <text evidence="5">Belongs to the EssB family.</text>
</comment>
<keyword id="KW-1003">Cell membrane</keyword>
<keyword id="KW-0175">Coiled coil</keyword>
<keyword id="KW-0472">Membrane</keyword>
<keyword id="KW-0812">Transmembrane</keyword>
<keyword id="KW-1133">Transmembrane helix</keyword>
<keyword id="KW-0843">Virulence</keyword>
<organism>
    <name type="scientific">Staphylococcus aureus (strain Mu50 / ATCC 700699)</name>
    <dbReference type="NCBI Taxonomy" id="158878"/>
    <lineage>
        <taxon>Bacteria</taxon>
        <taxon>Bacillati</taxon>
        <taxon>Bacillota</taxon>
        <taxon>Bacilli</taxon>
        <taxon>Bacillales</taxon>
        <taxon>Staphylococcaceae</taxon>
        <taxon>Staphylococcus</taxon>
    </lineage>
</organism>
<proteinExistence type="inferred from homology"/>
<sequence>MVKNHNPKNEMQDMLTPLDAEEAAKTKLRLDMREIPKSSIKPEHFHLMYLLEQHSPYFIDAELTELRDSFQIHYDINDNHTPFDNIKSFTKNEKLRYLLNIKNLEEVNRTRYTFVLAPDELFFTRDGLPIAKTRGLQNVVDPLPVSEAEFLTRYKALVICAFNEKQSFDALVEGNLELHKGTPFETKVIEAATLDLLTAFLDEQYQKQEQDYSQNYAYVRKVGHTVFKWVAIGMTTLSVLLIAFLAFLYFSVMKHNERIEKGYQAFVKDDYTQVLNTYDDLDGKKLDKEALYIYAKSYIQTNKQGLEKDKKENLLNNVTPNSNKDYLLYWMELGQGHLDEAINIATYLDDNDITKLALINKLNEIKNNGDLSNDKRSEETKKYNDKLQDILDKEKQVKDEKAKSEEEKAKAKDEKLKQQEENEKKQKEQAQKDKEKRQEAERKK</sequence>
<dbReference type="EMBL" id="BA000017">
    <property type="protein sequence ID" value="BAB56448.1"/>
    <property type="molecule type" value="Genomic_DNA"/>
</dbReference>
<dbReference type="RefSeq" id="WP_000240338.1">
    <property type="nucleotide sequence ID" value="NC_002758.2"/>
</dbReference>
<dbReference type="SMR" id="Q99WU0"/>
<dbReference type="TCDB" id="3.A.7.17.1">
    <property type="family name" value="the type iv (conjugal dna-protein transfer or virb) secretory pathway (ivsp) family"/>
</dbReference>
<dbReference type="KEGG" id="sav:SAV0286"/>
<dbReference type="HOGENOM" id="CLU_049737_0_0_9"/>
<dbReference type="PhylomeDB" id="Q99WU0"/>
<dbReference type="Proteomes" id="UP000002481">
    <property type="component" value="Chromosome"/>
</dbReference>
<dbReference type="GO" id="GO:0005886">
    <property type="term" value="C:plasma membrane"/>
    <property type="evidence" value="ECO:0007669"/>
    <property type="project" value="UniProtKB-SubCell"/>
</dbReference>
<dbReference type="Gene3D" id="1.10.510.10">
    <property type="entry name" value="Transferase(Phosphotransferase) domain 1"/>
    <property type="match status" value="1"/>
</dbReference>
<dbReference type="Gene3D" id="1.25.40.680">
    <property type="entry name" value="Type VII secretion system EssB, C-terminal-like domain"/>
    <property type="match status" value="1"/>
</dbReference>
<dbReference type="InterPro" id="IPR018778">
    <property type="entry name" value="T7SS_EssB"/>
</dbReference>
<dbReference type="InterPro" id="IPR042565">
    <property type="entry name" value="T7SS_EssB_C"/>
</dbReference>
<dbReference type="NCBIfam" id="TIGR03926">
    <property type="entry name" value="T7_EssB"/>
    <property type="match status" value="1"/>
</dbReference>
<dbReference type="Pfam" id="PF10140">
    <property type="entry name" value="YukC"/>
    <property type="match status" value="1"/>
</dbReference>
<gene>
    <name evidence="2" type="primary">essB</name>
    <name type="ordered locus">SAV0286</name>
</gene>
<reference key="1">
    <citation type="journal article" date="2001" name="Lancet">
        <title>Whole genome sequencing of meticillin-resistant Staphylococcus aureus.</title>
        <authorList>
            <person name="Kuroda M."/>
            <person name="Ohta T."/>
            <person name="Uchiyama I."/>
            <person name="Baba T."/>
            <person name="Yuzawa H."/>
            <person name="Kobayashi I."/>
            <person name="Cui L."/>
            <person name="Oguchi A."/>
            <person name="Aoki K."/>
            <person name="Nagai Y."/>
            <person name="Lian J.-Q."/>
            <person name="Ito T."/>
            <person name="Kanamori M."/>
            <person name="Matsumaru H."/>
            <person name="Maruyama A."/>
            <person name="Murakami H."/>
            <person name="Hosoyama A."/>
            <person name="Mizutani-Ui Y."/>
            <person name="Takahashi N.K."/>
            <person name="Sawano T."/>
            <person name="Inoue R."/>
            <person name="Kaito C."/>
            <person name="Sekimizu K."/>
            <person name="Hirakawa H."/>
            <person name="Kuhara S."/>
            <person name="Goto S."/>
            <person name="Yabuzaki J."/>
            <person name="Kanehisa M."/>
            <person name="Yamashita A."/>
            <person name="Oshima K."/>
            <person name="Furuya K."/>
            <person name="Yoshino C."/>
            <person name="Shiba T."/>
            <person name="Hattori M."/>
            <person name="Ogasawara N."/>
            <person name="Hayashi H."/>
            <person name="Hiramatsu K."/>
        </authorList>
    </citation>
    <scope>NUCLEOTIDE SEQUENCE [LARGE SCALE GENOMIC DNA]</scope>
    <source>
        <strain>Mu50 / ATCC 700699</strain>
    </source>
</reference>
<protein>
    <recommendedName>
        <fullName evidence="2">Type VII secretion system protein EssB</fullName>
    </recommendedName>
</protein>
<name>ESSB_STAAM</name>
<feature type="chain" id="PRO_0000087063" description="Type VII secretion system protein EssB">
    <location>
        <begin position="1"/>
        <end position="444"/>
    </location>
</feature>
<feature type="topological domain" description="Cytoplasmic" evidence="2">
    <location>
        <begin position="1"/>
        <end position="229"/>
    </location>
</feature>
<feature type="transmembrane region" description="Helical" evidence="3">
    <location>
        <begin position="230"/>
        <end position="250"/>
    </location>
</feature>
<feature type="topological domain" description="Extracellular" evidence="2">
    <location>
        <begin position="251"/>
        <end position="444"/>
    </location>
</feature>
<feature type="region of interest" description="Disordered" evidence="4">
    <location>
        <begin position="366"/>
        <end position="444"/>
    </location>
</feature>
<feature type="coiled-coil region" evidence="3">
    <location>
        <begin position="387"/>
        <end position="443"/>
    </location>
</feature>
<feature type="compositionally biased region" description="Basic and acidic residues" evidence="4">
    <location>
        <begin position="372"/>
        <end position="444"/>
    </location>
</feature>
<evidence type="ECO:0000250" key="1">
    <source>
        <dbReference type="UniProtKB" id="P0C053"/>
    </source>
</evidence>
<evidence type="ECO:0000250" key="2">
    <source>
        <dbReference type="UniProtKB" id="Q2G185"/>
    </source>
</evidence>
<evidence type="ECO:0000255" key="3"/>
<evidence type="ECO:0000256" key="4">
    <source>
        <dbReference type="SAM" id="MobiDB-lite"/>
    </source>
</evidence>
<evidence type="ECO:0000305" key="5"/>
<accession>Q99WU0</accession>